<accession>A4GG66</accession>
<dbReference type="EMBL" id="DQ871218">
    <property type="protein sequence ID" value="ABI54096.1"/>
    <property type="molecule type" value="Genomic_DNA"/>
</dbReference>
<dbReference type="EMBL" id="DQ871218">
    <property type="protein sequence ID" value="ABI54097.1"/>
    <property type="molecule type" value="Genomic_DNA"/>
</dbReference>
<dbReference type="EMBL" id="DQ871218">
    <property type="protein sequence ID" value="ABI54098.1"/>
    <property type="molecule type" value="Genomic_DNA"/>
</dbReference>
<dbReference type="EMBL" id="DQ871218">
    <property type="protein sequence ID" value="ABI54099.1"/>
    <property type="molecule type" value="Genomic_DNA"/>
</dbReference>
<dbReference type="EMBL" id="CH473948">
    <property type="protein sequence ID" value="EDM06232.1"/>
    <property type="molecule type" value="Genomic_DNA"/>
</dbReference>
<dbReference type="EMBL" id="BC166405">
    <property type="protein sequence ID" value="AAI66405.1"/>
    <property type="molecule type" value="mRNA"/>
</dbReference>
<dbReference type="RefSeq" id="NP_001078850.1">
    <property type="nucleotide sequence ID" value="NM_001085381.2"/>
</dbReference>
<dbReference type="RefSeq" id="XP_017452538.1">
    <property type="nucleotide sequence ID" value="XM_017597049.3"/>
</dbReference>
<dbReference type="RefSeq" id="XP_017452539.1">
    <property type="nucleotide sequence ID" value="XM_017597050.1"/>
</dbReference>
<dbReference type="RefSeq" id="XP_038941237.1">
    <property type="nucleotide sequence ID" value="XM_039085309.2"/>
</dbReference>
<dbReference type="RefSeq" id="XP_038941238.1">
    <property type="nucleotide sequence ID" value="XM_039085310.2"/>
</dbReference>
<dbReference type="RefSeq" id="XP_038941239.1">
    <property type="nucleotide sequence ID" value="XM_039085311.2"/>
</dbReference>
<dbReference type="RefSeq" id="XP_038941240.1">
    <property type="nucleotide sequence ID" value="XM_039085312.2"/>
</dbReference>
<dbReference type="RefSeq" id="XP_063124562.1">
    <property type="nucleotide sequence ID" value="XM_063268492.1"/>
</dbReference>
<dbReference type="BMRB" id="A4GG66"/>
<dbReference type="SMR" id="A4GG66"/>
<dbReference type="FunCoup" id="A4GG66">
    <property type="interactions" value="486"/>
</dbReference>
<dbReference type="STRING" id="10116.ENSRNOP00000076255"/>
<dbReference type="PhosphoSitePlus" id="A4GG66"/>
<dbReference type="PaxDb" id="10116-ENSRNOP00000066371"/>
<dbReference type="Ensembl" id="ENSRNOT00000093570.2">
    <property type="protein sequence ID" value="ENSRNOP00000076255.1"/>
    <property type="gene ID" value="ENSRNOG00000048838.4"/>
</dbReference>
<dbReference type="Ensembl" id="ENSRNOT00000096574.1">
    <property type="protein sequence ID" value="ENSRNOP00000081758.1"/>
    <property type="gene ID" value="ENSRNOG00000048838.4"/>
</dbReference>
<dbReference type="Ensembl" id="ENSRNOT00000108179.1">
    <property type="protein sequence ID" value="ENSRNOP00000087322.1"/>
    <property type="gene ID" value="ENSRNOG00000048838.4"/>
</dbReference>
<dbReference type="Ensembl" id="ENSRNOT00000116881.1">
    <property type="protein sequence ID" value="ENSRNOP00000096467.1"/>
    <property type="gene ID" value="ENSRNOG00000048838.4"/>
</dbReference>
<dbReference type="Ensembl" id="ENSRNOT00000117898.1">
    <property type="protein sequence ID" value="ENSRNOP00000094267.1"/>
    <property type="gene ID" value="ENSRNOG00000048838.4"/>
</dbReference>
<dbReference type="GeneID" id="266706"/>
<dbReference type="KEGG" id="rno:266706"/>
<dbReference type="AGR" id="RGD:628889"/>
<dbReference type="CTD" id="10052"/>
<dbReference type="RGD" id="628889">
    <property type="gene designation" value="Gjc1"/>
</dbReference>
<dbReference type="eggNOG" id="ENOG502QV2G">
    <property type="taxonomic scope" value="Eukaryota"/>
</dbReference>
<dbReference type="GeneTree" id="ENSGT01130000278276"/>
<dbReference type="HOGENOM" id="CLU_037388_0_0_1"/>
<dbReference type="InParanoid" id="A4GG66"/>
<dbReference type="OMA" id="VRWKQHR"/>
<dbReference type="OrthoDB" id="8875898at2759"/>
<dbReference type="PhylomeDB" id="A4GG66"/>
<dbReference type="Reactome" id="R-RNO-112303">
    <property type="pathway name" value="Electric Transmission Across Gap Junctions"/>
</dbReference>
<dbReference type="Reactome" id="R-RNO-190861">
    <property type="pathway name" value="Gap junction assembly"/>
</dbReference>
<dbReference type="PRO" id="PR:A4GG66"/>
<dbReference type="Proteomes" id="UP000002494">
    <property type="component" value="Chromosome 10"/>
</dbReference>
<dbReference type="Proteomes" id="UP000234681">
    <property type="component" value="Chromosome 10"/>
</dbReference>
<dbReference type="Bgee" id="ENSRNOG00000048838">
    <property type="expression patterns" value="Expressed in quadriceps femoris and 19 other cell types or tissues"/>
</dbReference>
<dbReference type="GO" id="GO:0005922">
    <property type="term" value="C:connexin complex"/>
    <property type="evidence" value="ECO:0000266"/>
    <property type="project" value="RGD"/>
</dbReference>
<dbReference type="GO" id="GO:0005921">
    <property type="term" value="C:gap junction"/>
    <property type="evidence" value="ECO:0000314"/>
    <property type="project" value="RGD"/>
</dbReference>
<dbReference type="GO" id="GO:0045202">
    <property type="term" value="C:synapse"/>
    <property type="evidence" value="ECO:0007669"/>
    <property type="project" value="GOC"/>
</dbReference>
<dbReference type="GO" id="GO:0005243">
    <property type="term" value="F:gap junction channel activity"/>
    <property type="evidence" value="ECO:0000314"/>
    <property type="project" value="RGD"/>
</dbReference>
<dbReference type="GO" id="GO:0086077">
    <property type="term" value="F:gap junction channel activity involved in AV node cell-bundle of His cell electrical coupling"/>
    <property type="evidence" value="ECO:0000266"/>
    <property type="project" value="RGD"/>
</dbReference>
<dbReference type="GO" id="GO:0005216">
    <property type="term" value="F:monoatomic ion channel activity"/>
    <property type="evidence" value="ECO:0000266"/>
    <property type="project" value="RGD"/>
</dbReference>
<dbReference type="GO" id="GO:0086053">
    <property type="term" value="P:AV node cell to bundle of His cell communication by electrical coupling"/>
    <property type="evidence" value="ECO:0000266"/>
    <property type="project" value="RGD"/>
</dbReference>
<dbReference type="GO" id="GO:0048738">
    <property type="term" value="P:cardiac muscle tissue development"/>
    <property type="evidence" value="ECO:0000266"/>
    <property type="project" value="RGD"/>
</dbReference>
<dbReference type="GO" id="GO:0048468">
    <property type="term" value="P:cell development"/>
    <property type="evidence" value="ECO:0000266"/>
    <property type="project" value="RGD"/>
</dbReference>
<dbReference type="GO" id="GO:0007267">
    <property type="term" value="P:cell-cell signaling"/>
    <property type="evidence" value="ECO:0000314"/>
    <property type="project" value="RGD"/>
</dbReference>
<dbReference type="GO" id="GO:0007268">
    <property type="term" value="P:chemical synaptic transmission"/>
    <property type="evidence" value="ECO:0000266"/>
    <property type="project" value="RGD"/>
</dbReference>
<dbReference type="GO" id="GO:0016264">
    <property type="term" value="P:gap junction assembly"/>
    <property type="evidence" value="ECO:0000266"/>
    <property type="project" value="RGD"/>
</dbReference>
<dbReference type="GO" id="GO:0007507">
    <property type="term" value="P:heart development"/>
    <property type="evidence" value="ECO:0000266"/>
    <property type="project" value="RGD"/>
</dbReference>
<dbReference type="GO" id="GO:0001570">
    <property type="term" value="P:vasculogenesis"/>
    <property type="evidence" value="ECO:0000266"/>
    <property type="project" value="RGD"/>
</dbReference>
<dbReference type="GO" id="GO:0007601">
    <property type="term" value="P:visual perception"/>
    <property type="evidence" value="ECO:0000266"/>
    <property type="project" value="RGD"/>
</dbReference>
<dbReference type="FunFam" id="1.20.1440.80:FF:000003">
    <property type="entry name" value="Gap junction protein"/>
    <property type="match status" value="1"/>
</dbReference>
<dbReference type="Gene3D" id="1.20.1440.80">
    <property type="entry name" value="Gap junction channel protein cysteine-rich domain"/>
    <property type="match status" value="1"/>
</dbReference>
<dbReference type="InterPro" id="IPR000500">
    <property type="entry name" value="Connexin"/>
</dbReference>
<dbReference type="InterPro" id="IPR002265">
    <property type="entry name" value="Connexin45"/>
</dbReference>
<dbReference type="InterPro" id="IPR019570">
    <property type="entry name" value="Connexin_CCC"/>
</dbReference>
<dbReference type="InterPro" id="IPR017990">
    <property type="entry name" value="Connexin_CS"/>
</dbReference>
<dbReference type="InterPro" id="IPR013092">
    <property type="entry name" value="Connexin_N"/>
</dbReference>
<dbReference type="InterPro" id="IPR038359">
    <property type="entry name" value="Connexin_N_sf"/>
</dbReference>
<dbReference type="PANTHER" id="PTHR11984">
    <property type="entry name" value="CONNEXIN"/>
    <property type="match status" value="1"/>
</dbReference>
<dbReference type="PANTHER" id="PTHR11984:SF6">
    <property type="entry name" value="GAP JUNCTION GAMMA-1 PROTEIN"/>
    <property type="match status" value="1"/>
</dbReference>
<dbReference type="Pfam" id="PF00029">
    <property type="entry name" value="Connexin"/>
    <property type="match status" value="1"/>
</dbReference>
<dbReference type="PRINTS" id="PR00206">
    <property type="entry name" value="CONNEXIN"/>
</dbReference>
<dbReference type="PRINTS" id="PR01136">
    <property type="entry name" value="CONNEXINA6"/>
</dbReference>
<dbReference type="SMART" id="SM00037">
    <property type="entry name" value="CNX"/>
    <property type="match status" value="1"/>
</dbReference>
<dbReference type="SMART" id="SM01089">
    <property type="entry name" value="Connexin_CCC"/>
    <property type="match status" value="1"/>
</dbReference>
<dbReference type="PROSITE" id="PS00407">
    <property type="entry name" value="CONNEXINS_1"/>
    <property type="match status" value="1"/>
</dbReference>
<dbReference type="PROSITE" id="PS00408">
    <property type="entry name" value="CONNEXINS_2"/>
    <property type="match status" value="1"/>
</dbReference>
<name>CXG1_RAT</name>
<gene>
    <name type="primary">Gjc1</name>
    <name type="synonym">Gja7</name>
</gene>
<sequence>MSWSFLTRLLEEIHNHSTFVGKIWLTVLIVFRIVLTAVGGESIYYDEQSKFVCNTEQPGCENVCYDAFAPLSHVRFWVFQIILVATPSVMYLGYAIHKIAKMEHGEADKKAARSKPYAMRWKQHRALEETEEDHEEDPMMYPEMELESEKENKEQSQPKPKHDGRRRIREDGLMKIYVLQLLARTVFEVGFLIGQYFLYGFQVHPFYVCSRLPCPHKIDCFISRPTEKTIFLLIMYGVTGLCLLLNIWEMLHLGFGTIRDSLNSKRRELDDPGAYNYPFTWNTPSAPPGYNIAVKPDQIQYTELSNAKIAYKQNKANIAQEQQYGSHEEHLPADLETLQREIRMAQERLDLAIQAYHHQNNPHGPREKKAKVGSKSGSNKSSISSKSGDGKTSVWI</sequence>
<protein>
    <recommendedName>
        <fullName>Gap junction gamma-1 protein</fullName>
    </recommendedName>
    <alternativeName>
        <fullName>Connexin-45</fullName>
        <shortName>Cx45</shortName>
    </alternativeName>
    <alternativeName>
        <fullName>Gap junction alpha-7 protein</fullName>
    </alternativeName>
</protein>
<feature type="chain" id="PRO_0000369543" description="Gap junction gamma-1 protein">
    <location>
        <begin position="1"/>
        <end position="396"/>
    </location>
</feature>
<feature type="topological domain" description="Cytoplasmic" evidence="2">
    <location>
        <begin position="1"/>
        <end position="18"/>
    </location>
</feature>
<feature type="transmembrane region" description="Helical" evidence="2">
    <location>
        <begin position="19"/>
        <end position="39"/>
    </location>
</feature>
<feature type="topological domain" description="Extracellular" evidence="2">
    <location>
        <begin position="40"/>
        <end position="75"/>
    </location>
</feature>
<feature type="transmembrane region" description="Helical" evidence="2">
    <location>
        <begin position="76"/>
        <end position="96"/>
    </location>
</feature>
<feature type="topological domain" description="Cytoplasmic" evidence="2">
    <location>
        <begin position="97"/>
        <end position="175"/>
    </location>
</feature>
<feature type="transmembrane region" description="Helical" evidence="2">
    <location>
        <begin position="176"/>
        <end position="198"/>
    </location>
</feature>
<feature type="topological domain" description="Extracellular" evidence="2">
    <location>
        <begin position="199"/>
        <end position="229"/>
    </location>
</feature>
<feature type="transmembrane region" description="Helical" evidence="2">
    <location>
        <begin position="230"/>
        <end position="250"/>
    </location>
</feature>
<feature type="topological domain" description="Cytoplasmic" evidence="2">
    <location>
        <begin position="251"/>
        <end position="396"/>
    </location>
</feature>
<feature type="region of interest" description="Disordered" evidence="3">
    <location>
        <begin position="145"/>
        <end position="165"/>
    </location>
</feature>
<feature type="region of interest" description="Disordered" evidence="3">
    <location>
        <begin position="357"/>
        <end position="396"/>
    </location>
</feature>
<feature type="coiled-coil region" evidence="2">
    <location>
        <begin position="303"/>
        <end position="358"/>
    </location>
</feature>
<feature type="compositionally biased region" description="Basic and acidic residues" evidence="3">
    <location>
        <begin position="147"/>
        <end position="156"/>
    </location>
</feature>
<feature type="compositionally biased region" description="Low complexity" evidence="3">
    <location>
        <begin position="373"/>
        <end position="396"/>
    </location>
</feature>
<proteinExistence type="evidence at transcript level"/>
<reference key="1">
    <citation type="journal article" date="2007" name="DNA Cell Biol.">
        <title>Primary structure, organization, and expression of the rat connexin45 gene.</title>
        <authorList>
            <person name="Teunissen B.E."/>
            <person name="Jansen A.T."/>
            <person name="Mutsaers N.A."/>
            <person name="Vuerhard M.J."/>
            <person name="Vos M.A."/>
            <person name="Bierhuizen M.F."/>
        </authorList>
    </citation>
    <scope>NUCLEOTIDE SEQUENCE [GENOMIC DNA]</scope>
    <scope>TISSUE SPECIFICITY</scope>
    <source>
        <strain>Wistar</strain>
        <tissue>Liver</tissue>
    </source>
</reference>
<reference key="2">
    <citation type="submission" date="2007-06" db="EMBL/GenBank/DDBJ databases">
        <authorList>
            <person name="Mural R.J."/>
            <person name="Adams M.D."/>
            <person name="Myers E.W."/>
            <person name="Smith H.O."/>
            <person name="Venter J.C."/>
        </authorList>
    </citation>
    <scope>NUCLEOTIDE SEQUENCE [LARGE SCALE GENOMIC DNA]</scope>
</reference>
<reference key="3">
    <citation type="journal article" date="2004" name="Genome Res.">
        <title>The status, quality, and expansion of the NIH full-length cDNA project: the Mammalian Gene Collection (MGC).</title>
        <authorList>
            <consortium name="The MGC Project Team"/>
        </authorList>
    </citation>
    <scope>NUCLEOTIDE SEQUENCE [LARGE SCALE MRNA]</scope>
    <source>
        <tissue>Embryonic kidney</tissue>
    </source>
</reference>
<evidence type="ECO:0000250" key="1"/>
<evidence type="ECO:0000255" key="2"/>
<evidence type="ECO:0000256" key="3">
    <source>
        <dbReference type="SAM" id="MobiDB-lite"/>
    </source>
</evidence>
<evidence type="ECO:0000269" key="4">
    <source>
    </source>
</evidence>
<evidence type="ECO:0000305" key="5"/>
<organism>
    <name type="scientific">Rattus norvegicus</name>
    <name type="common">Rat</name>
    <dbReference type="NCBI Taxonomy" id="10116"/>
    <lineage>
        <taxon>Eukaryota</taxon>
        <taxon>Metazoa</taxon>
        <taxon>Chordata</taxon>
        <taxon>Craniata</taxon>
        <taxon>Vertebrata</taxon>
        <taxon>Euteleostomi</taxon>
        <taxon>Mammalia</taxon>
        <taxon>Eutheria</taxon>
        <taxon>Euarchontoglires</taxon>
        <taxon>Glires</taxon>
        <taxon>Rodentia</taxon>
        <taxon>Myomorpha</taxon>
        <taxon>Muroidea</taxon>
        <taxon>Muridae</taxon>
        <taxon>Murinae</taxon>
        <taxon>Rattus</taxon>
    </lineage>
</organism>
<keyword id="KW-0965">Cell junction</keyword>
<keyword id="KW-1003">Cell membrane</keyword>
<keyword id="KW-0175">Coiled coil</keyword>
<keyword id="KW-0303">Gap junction</keyword>
<keyword id="KW-0472">Membrane</keyword>
<keyword id="KW-1185">Reference proteome</keyword>
<keyword id="KW-0812">Transmembrane</keyword>
<keyword id="KW-1133">Transmembrane helix</keyword>
<comment type="function">
    <text evidence="1">One gap junction consists of a cluster of closely packed pairs of transmembrane channels, the connexons, through which materials of low MW diffuse from one cell to a neighboring cell.</text>
</comment>
<comment type="subunit">
    <text evidence="1">A connexon is composed of a hexamer of connexins. Interacts with CNST (By similarity).</text>
</comment>
<comment type="subcellular location">
    <subcellularLocation>
        <location evidence="1">Cell membrane</location>
        <topology evidence="1">Multi-pass membrane protein</topology>
    </subcellularLocation>
    <subcellularLocation>
        <location evidence="1">Cell junction</location>
        <location evidence="1">Gap junction</location>
    </subcellularLocation>
</comment>
<comment type="tissue specificity">
    <text evidence="4">Ubiquitous.</text>
</comment>
<comment type="similarity">
    <text evidence="5">Belongs to the connexin family. Gamma-type subfamily.</text>
</comment>